<proteinExistence type="inferred from homology"/>
<sequence length="87" mass="9518">MDLTEGSALGVFSCQLCEVSSPYSFYGQKPPNTRAIVLLEECFGIKDPFSPEREKFLILGSKCSLCSKTVCVGTVRRSCDSQSEAKL</sequence>
<gene>
    <name type="primary">cdpf1</name>
    <name type="ORF">si:ch211-239e6.4</name>
    <name type="ORF">zgc:136265</name>
</gene>
<protein>
    <recommendedName>
        <fullName>Cysteine-rich DPF motif domain-containing protein 1</fullName>
    </recommendedName>
</protein>
<accession>Q5RGZ1</accession>
<accession>Q08CV5</accession>
<organism>
    <name type="scientific">Danio rerio</name>
    <name type="common">Zebrafish</name>
    <name type="synonym">Brachydanio rerio</name>
    <dbReference type="NCBI Taxonomy" id="7955"/>
    <lineage>
        <taxon>Eukaryota</taxon>
        <taxon>Metazoa</taxon>
        <taxon>Chordata</taxon>
        <taxon>Craniata</taxon>
        <taxon>Vertebrata</taxon>
        <taxon>Euteleostomi</taxon>
        <taxon>Actinopterygii</taxon>
        <taxon>Neopterygii</taxon>
        <taxon>Teleostei</taxon>
        <taxon>Ostariophysi</taxon>
        <taxon>Cypriniformes</taxon>
        <taxon>Danionidae</taxon>
        <taxon>Danioninae</taxon>
        <taxon>Danio</taxon>
    </lineage>
</organism>
<reference key="1">
    <citation type="journal article" date="2013" name="Nature">
        <title>The zebrafish reference genome sequence and its relationship to the human genome.</title>
        <authorList>
            <person name="Howe K."/>
            <person name="Clark M.D."/>
            <person name="Torroja C.F."/>
            <person name="Torrance J."/>
            <person name="Berthelot C."/>
            <person name="Muffato M."/>
            <person name="Collins J.E."/>
            <person name="Humphray S."/>
            <person name="McLaren K."/>
            <person name="Matthews L."/>
            <person name="McLaren S."/>
            <person name="Sealy I."/>
            <person name="Caccamo M."/>
            <person name="Churcher C."/>
            <person name="Scott C."/>
            <person name="Barrett J.C."/>
            <person name="Koch R."/>
            <person name="Rauch G.J."/>
            <person name="White S."/>
            <person name="Chow W."/>
            <person name="Kilian B."/>
            <person name="Quintais L.T."/>
            <person name="Guerra-Assuncao J.A."/>
            <person name="Zhou Y."/>
            <person name="Gu Y."/>
            <person name="Yen J."/>
            <person name="Vogel J.H."/>
            <person name="Eyre T."/>
            <person name="Redmond S."/>
            <person name="Banerjee R."/>
            <person name="Chi J."/>
            <person name="Fu B."/>
            <person name="Langley E."/>
            <person name="Maguire S.F."/>
            <person name="Laird G.K."/>
            <person name="Lloyd D."/>
            <person name="Kenyon E."/>
            <person name="Donaldson S."/>
            <person name="Sehra H."/>
            <person name="Almeida-King J."/>
            <person name="Loveland J."/>
            <person name="Trevanion S."/>
            <person name="Jones M."/>
            <person name="Quail M."/>
            <person name="Willey D."/>
            <person name="Hunt A."/>
            <person name="Burton J."/>
            <person name="Sims S."/>
            <person name="McLay K."/>
            <person name="Plumb B."/>
            <person name="Davis J."/>
            <person name="Clee C."/>
            <person name="Oliver K."/>
            <person name="Clark R."/>
            <person name="Riddle C."/>
            <person name="Elliot D."/>
            <person name="Threadgold G."/>
            <person name="Harden G."/>
            <person name="Ware D."/>
            <person name="Begum S."/>
            <person name="Mortimore B."/>
            <person name="Kerry G."/>
            <person name="Heath P."/>
            <person name="Phillimore B."/>
            <person name="Tracey A."/>
            <person name="Corby N."/>
            <person name="Dunn M."/>
            <person name="Johnson C."/>
            <person name="Wood J."/>
            <person name="Clark S."/>
            <person name="Pelan S."/>
            <person name="Griffiths G."/>
            <person name="Smith M."/>
            <person name="Glithero R."/>
            <person name="Howden P."/>
            <person name="Barker N."/>
            <person name="Lloyd C."/>
            <person name="Stevens C."/>
            <person name="Harley J."/>
            <person name="Holt K."/>
            <person name="Panagiotidis G."/>
            <person name="Lovell J."/>
            <person name="Beasley H."/>
            <person name="Henderson C."/>
            <person name="Gordon D."/>
            <person name="Auger K."/>
            <person name="Wright D."/>
            <person name="Collins J."/>
            <person name="Raisen C."/>
            <person name="Dyer L."/>
            <person name="Leung K."/>
            <person name="Robertson L."/>
            <person name="Ambridge K."/>
            <person name="Leongamornlert D."/>
            <person name="McGuire S."/>
            <person name="Gilderthorp R."/>
            <person name="Griffiths C."/>
            <person name="Manthravadi D."/>
            <person name="Nichol S."/>
            <person name="Barker G."/>
            <person name="Whitehead S."/>
            <person name="Kay M."/>
            <person name="Brown J."/>
            <person name="Murnane C."/>
            <person name="Gray E."/>
            <person name="Humphries M."/>
            <person name="Sycamore N."/>
            <person name="Barker D."/>
            <person name="Saunders D."/>
            <person name="Wallis J."/>
            <person name="Babbage A."/>
            <person name="Hammond S."/>
            <person name="Mashreghi-Mohammadi M."/>
            <person name="Barr L."/>
            <person name="Martin S."/>
            <person name="Wray P."/>
            <person name="Ellington A."/>
            <person name="Matthews N."/>
            <person name="Ellwood M."/>
            <person name="Woodmansey R."/>
            <person name="Clark G."/>
            <person name="Cooper J."/>
            <person name="Tromans A."/>
            <person name="Grafham D."/>
            <person name="Skuce C."/>
            <person name="Pandian R."/>
            <person name="Andrews R."/>
            <person name="Harrison E."/>
            <person name="Kimberley A."/>
            <person name="Garnett J."/>
            <person name="Fosker N."/>
            <person name="Hall R."/>
            <person name="Garner P."/>
            <person name="Kelly D."/>
            <person name="Bird C."/>
            <person name="Palmer S."/>
            <person name="Gehring I."/>
            <person name="Berger A."/>
            <person name="Dooley C.M."/>
            <person name="Ersan-Urun Z."/>
            <person name="Eser C."/>
            <person name="Geiger H."/>
            <person name="Geisler M."/>
            <person name="Karotki L."/>
            <person name="Kirn A."/>
            <person name="Konantz J."/>
            <person name="Konantz M."/>
            <person name="Oberlander M."/>
            <person name="Rudolph-Geiger S."/>
            <person name="Teucke M."/>
            <person name="Lanz C."/>
            <person name="Raddatz G."/>
            <person name="Osoegawa K."/>
            <person name="Zhu B."/>
            <person name="Rapp A."/>
            <person name="Widaa S."/>
            <person name="Langford C."/>
            <person name="Yang F."/>
            <person name="Schuster S.C."/>
            <person name="Carter N.P."/>
            <person name="Harrow J."/>
            <person name="Ning Z."/>
            <person name="Herrero J."/>
            <person name="Searle S.M."/>
            <person name="Enright A."/>
            <person name="Geisler R."/>
            <person name="Plasterk R.H."/>
            <person name="Lee C."/>
            <person name="Westerfield M."/>
            <person name="de Jong P.J."/>
            <person name="Zon L.I."/>
            <person name="Postlethwait J.H."/>
            <person name="Nusslein-Volhard C."/>
            <person name="Hubbard T.J."/>
            <person name="Roest Crollius H."/>
            <person name="Rogers J."/>
            <person name="Stemple D.L."/>
        </authorList>
    </citation>
    <scope>NUCLEOTIDE SEQUENCE [LARGE SCALE GENOMIC DNA]</scope>
    <source>
        <strain>Tuebingen</strain>
    </source>
</reference>
<reference key="2">
    <citation type="submission" date="2006-04" db="EMBL/GenBank/DDBJ databases">
        <authorList>
            <consortium name="NIH - Zebrafish Gene Collection (ZGC) project"/>
        </authorList>
    </citation>
    <scope>NUCLEOTIDE SEQUENCE [LARGE SCALE MRNA]</scope>
    <source>
        <tissue>Skin</tissue>
        <tissue>Testis</tissue>
    </source>
</reference>
<comment type="similarity">
    <text evidence="1">Belongs to the CDPF1 family.</text>
</comment>
<comment type="sequence caution" evidence="1">
    <conflict type="erroneous termination">
        <sequence resource="EMBL-CDS" id="AAI24073"/>
    </conflict>
    <text>Extended C-terminus.</text>
</comment>
<name>CDPF1_DANRE</name>
<evidence type="ECO:0000305" key="1"/>
<feature type="chain" id="PRO_0000341363" description="Cysteine-rich DPF motif domain-containing protein 1">
    <location>
        <begin position="1"/>
        <end position="87"/>
    </location>
</feature>
<feature type="sequence conflict" description="In Ref. 2; AAI24073." evidence="1" ref="2">
    <original>E</original>
    <variation>G</variation>
    <location>
        <position position="41"/>
    </location>
</feature>
<feature type="sequence conflict" description="In Ref. 2; AAI24073." evidence="1" ref="2">
    <original>A</original>
    <variation>V</variation>
    <location>
        <position position="85"/>
    </location>
</feature>
<keyword id="KW-1185">Reference proteome</keyword>
<dbReference type="EMBL" id="BX649425">
    <property type="protein sequence ID" value="CAI11870.1"/>
    <property type="molecule type" value="Genomic_DNA"/>
</dbReference>
<dbReference type="EMBL" id="BC115061">
    <property type="protein sequence ID" value="AAI15062.1"/>
    <property type="molecule type" value="mRNA"/>
</dbReference>
<dbReference type="EMBL" id="BC124072">
    <property type="protein sequence ID" value="AAI24073.1"/>
    <property type="status" value="ALT_SEQ"/>
    <property type="molecule type" value="mRNA"/>
</dbReference>
<dbReference type="RefSeq" id="NP_001070230.2">
    <property type="nucleotide sequence ID" value="NM_001076762.2"/>
</dbReference>
<dbReference type="FunCoup" id="Q5RGZ1">
    <property type="interactions" value="132"/>
</dbReference>
<dbReference type="STRING" id="7955.ENSDARP00000142576"/>
<dbReference type="PaxDb" id="7955-ENSDARP00000114819"/>
<dbReference type="Ensembl" id="ENSDART00000137798">
    <property type="protein sequence ID" value="ENSDARP00000114819"/>
    <property type="gene ID" value="ENSDARG00000095705"/>
</dbReference>
<dbReference type="Ensembl" id="ENSDART00000184288">
    <property type="protein sequence ID" value="ENSDARP00000145478"/>
    <property type="gene ID" value="ENSDARG00000095705"/>
</dbReference>
<dbReference type="GeneID" id="563220"/>
<dbReference type="KEGG" id="dre:563220"/>
<dbReference type="AGR" id="ZFIN:ZDB-GENE-041210-170"/>
<dbReference type="CTD" id="150383"/>
<dbReference type="ZFIN" id="ZDB-GENE-041210-170">
    <property type="gene designation" value="cdpf1"/>
</dbReference>
<dbReference type="eggNOG" id="KOG4543">
    <property type="taxonomic scope" value="Eukaryota"/>
</dbReference>
<dbReference type="HOGENOM" id="CLU_169770_0_0_1"/>
<dbReference type="InParanoid" id="Q5RGZ1"/>
<dbReference type="OrthoDB" id="191995at2759"/>
<dbReference type="PhylomeDB" id="Q5RGZ1"/>
<dbReference type="TreeFam" id="TF313933"/>
<dbReference type="PRO" id="PR:Q5RGZ1"/>
<dbReference type="Proteomes" id="UP000000437">
    <property type="component" value="Chromosome 4"/>
</dbReference>
<dbReference type="Bgee" id="ENSDARG00000095705">
    <property type="expression patterns" value="Expressed in bone element and 30 other cell types or tissues"/>
</dbReference>
<dbReference type="ExpressionAtlas" id="Q5RGZ1">
    <property type="expression patterns" value="baseline and differential"/>
</dbReference>
<dbReference type="InterPro" id="IPR042426">
    <property type="entry name" value="CDPF1"/>
</dbReference>
<dbReference type="InterPro" id="IPR018785">
    <property type="entry name" value="CDPF1_dom"/>
</dbReference>
<dbReference type="PANTHER" id="PTHR31849:SF1">
    <property type="entry name" value="CYSTEINE-RICH DPF MOTIF DOMAIN-CONTAINING PROTEIN 1"/>
    <property type="match status" value="1"/>
</dbReference>
<dbReference type="PANTHER" id="PTHR31849">
    <property type="entry name" value="CYSTEINE-RICH PDF MOTIF DOMAIN-CONTAINING PROTEIN 1"/>
    <property type="match status" value="1"/>
</dbReference>
<dbReference type="Pfam" id="PF10170">
    <property type="entry name" value="C6_DPF"/>
    <property type="match status" value="1"/>
</dbReference>
<dbReference type="PRINTS" id="PR01995">
    <property type="entry name" value="UPF0595"/>
</dbReference>